<accession>Q9MAJ7</accession>
<accession>Q93Z63</accession>
<accession>Q9SCV7</accession>
<name>BGAL5_ARATH</name>
<comment type="catalytic activity">
    <reaction>
        <text>Hydrolysis of terminal non-reducing beta-D-galactose residues in beta-D-galactosides.</text>
        <dbReference type="EC" id="3.2.1.23"/>
    </reaction>
</comment>
<comment type="subcellular location">
    <subcellularLocation>
        <location evidence="3">Secreted</location>
        <location evidence="3">Extracellular space</location>
        <location evidence="3">Apoplast</location>
    </subcellularLocation>
</comment>
<comment type="tissue specificity">
    <text evidence="2">Expressed in leaves and flowers.</text>
</comment>
<comment type="similarity">
    <text evidence="3">Belongs to the glycosyl hydrolase 35 family.</text>
</comment>
<evidence type="ECO:0000255" key="1"/>
<evidence type="ECO:0000269" key="2">
    <source>
    </source>
</evidence>
<evidence type="ECO:0000305" key="3"/>
<reference key="1">
    <citation type="submission" date="1999-10" db="EMBL/GenBank/DDBJ databases">
        <title>The beta-galactosidases are encoding by a multigene family in Arabidopsis thaliana.</title>
        <authorList>
            <person name="Gy I."/>
            <person name="Kreis M."/>
            <person name="Lecharny A."/>
        </authorList>
    </citation>
    <scope>NUCLEOTIDE SEQUENCE [MRNA]</scope>
</reference>
<reference key="2">
    <citation type="journal article" date="2000" name="Nature">
        <title>Sequence and analysis of chromosome 1 of the plant Arabidopsis thaliana.</title>
        <authorList>
            <person name="Theologis A."/>
            <person name="Ecker J.R."/>
            <person name="Palm C.J."/>
            <person name="Federspiel N.A."/>
            <person name="Kaul S."/>
            <person name="White O."/>
            <person name="Alonso J."/>
            <person name="Altafi H."/>
            <person name="Araujo R."/>
            <person name="Bowman C.L."/>
            <person name="Brooks S.Y."/>
            <person name="Buehler E."/>
            <person name="Chan A."/>
            <person name="Chao Q."/>
            <person name="Chen H."/>
            <person name="Cheuk R.F."/>
            <person name="Chin C.W."/>
            <person name="Chung M.K."/>
            <person name="Conn L."/>
            <person name="Conway A.B."/>
            <person name="Conway A.R."/>
            <person name="Creasy T.H."/>
            <person name="Dewar K."/>
            <person name="Dunn P."/>
            <person name="Etgu P."/>
            <person name="Feldblyum T.V."/>
            <person name="Feng J.-D."/>
            <person name="Fong B."/>
            <person name="Fujii C.Y."/>
            <person name="Gill J.E."/>
            <person name="Goldsmith A.D."/>
            <person name="Haas B."/>
            <person name="Hansen N.F."/>
            <person name="Hughes B."/>
            <person name="Huizar L."/>
            <person name="Hunter J.L."/>
            <person name="Jenkins J."/>
            <person name="Johnson-Hopson C."/>
            <person name="Khan S."/>
            <person name="Khaykin E."/>
            <person name="Kim C.J."/>
            <person name="Koo H.L."/>
            <person name="Kremenetskaia I."/>
            <person name="Kurtz D.B."/>
            <person name="Kwan A."/>
            <person name="Lam B."/>
            <person name="Langin-Hooper S."/>
            <person name="Lee A."/>
            <person name="Lee J.M."/>
            <person name="Lenz C.A."/>
            <person name="Li J.H."/>
            <person name="Li Y.-P."/>
            <person name="Lin X."/>
            <person name="Liu S.X."/>
            <person name="Liu Z.A."/>
            <person name="Luros J.S."/>
            <person name="Maiti R."/>
            <person name="Marziali A."/>
            <person name="Militscher J."/>
            <person name="Miranda M."/>
            <person name="Nguyen M."/>
            <person name="Nierman W.C."/>
            <person name="Osborne B.I."/>
            <person name="Pai G."/>
            <person name="Peterson J."/>
            <person name="Pham P.K."/>
            <person name="Rizzo M."/>
            <person name="Rooney T."/>
            <person name="Rowley D."/>
            <person name="Sakano H."/>
            <person name="Salzberg S.L."/>
            <person name="Schwartz J.R."/>
            <person name="Shinn P."/>
            <person name="Southwick A.M."/>
            <person name="Sun H."/>
            <person name="Tallon L.J."/>
            <person name="Tambunga G."/>
            <person name="Toriumi M.J."/>
            <person name="Town C.D."/>
            <person name="Utterback T."/>
            <person name="Van Aken S."/>
            <person name="Vaysberg M."/>
            <person name="Vysotskaia V.S."/>
            <person name="Walker M."/>
            <person name="Wu D."/>
            <person name="Yu G."/>
            <person name="Fraser C.M."/>
            <person name="Venter J.C."/>
            <person name="Davis R.W."/>
        </authorList>
    </citation>
    <scope>NUCLEOTIDE SEQUENCE [LARGE SCALE GENOMIC DNA]</scope>
    <source>
        <strain>cv. Columbia</strain>
    </source>
</reference>
<reference key="3">
    <citation type="journal article" date="2017" name="Plant J.">
        <title>Araport11: a complete reannotation of the Arabidopsis thaliana reference genome.</title>
        <authorList>
            <person name="Cheng C.Y."/>
            <person name="Krishnakumar V."/>
            <person name="Chan A.P."/>
            <person name="Thibaud-Nissen F."/>
            <person name="Schobel S."/>
            <person name="Town C.D."/>
        </authorList>
    </citation>
    <scope>GENOME REANNOTATION</scope>
    <source>
        <strain>cv. Columbia</strain>
    </source>
</reference>
<reference key="4">
    <citation type="journal article" date="2003" name="Science">
        <title>Empirical analysis of transcriptional activity in the Arabidopsis genome.</title>
        <authorList>
            <person name="Yamada K."/>
            <person name="Lim J."/>
            <person name="Dale J.M."/>
            <person name="Chen H."/>
            <person name="Shinn P."/>
            <person name="Palm C.J."/>
            <person name="Southwick A.M."/>
            <person name="Wu H.C."/>
            <person name="Kim C.J."/>
            <person name="Nguyen M."/>
            <person name="Pham P.K."/>
            <person name="Cheuk R.F."/>
            <person name="Karlin-Newmann G."/>
            <person name="Liu S.X."/>
            <person name="Lam B."/>
            <person name="Sakano H."/>
            <person name="Wu T."/>
            <person name="Yu G."/>
            <person name="Miranda M."/>
            <person name="Quach H.L."/>
            <person name="Tripp M."/>
            <person name="Chang C.H."/>
            <person name="Lee J.M."/>
            <person name="Toriumi M.J."/>
            <person name="Chan M.M."/>
            <person name="Tang C.C."/>
            <person name="Onodera C.S."/>
            <person name="Deng J.M."/>
            <person name="Akiyama K."/>
            <person name="Ansari Y."/>
            <person name="Arakawa T."/>
            <person name="Banh J."/>
            <person name="Banno F."/>
            <person name="Bowser L."/>
            <person name="Brooks S.Y."/>
            <person name="Carninci P."/>
            <person name="Chao Q."/>
            <person name="Choy N."/>
            <person name="Enju A."/>
            <person name="Goldsmith A.D."/>
            <person name="Gurjal M."/>
            <person name="Hansen N.F."/>
            <person name="Hayashizaki Y."/>
            <person name="Johnson-Hopson C."/>
            <person name="Hsuan V.W."/>
            <person name="Iida K."/>
            <person name="Karnes M."/>
            <person name="Khan S."/>
            <person name="Koesema E."/>
            <person name="Ishida J."/>
            <person name="Jiang P.X."/>
            <person name="Jones T."/>
            <person name="Kawai J."/>
            <person name="Kamiya A."/>
            <person name="Meyers C."/>
            <person name="Nakajima M."/>
            <person name="Narusaka M."/>
            <person name="Seki M."/>
            <person name="Sakurai T."/>
            <person name="Satou M."/>
            <person name="Tamse R."/>
            <person name="Vaysberg M."/>
            <person name="Wallender E.K."/>
            <person name="Wong C."/>
            <person name="Yamamura Y."/>
            <person name="Yuan S."/>
            <person name="Shinozaki K."/>
            <person name="Davis R.W."/>
            <person name="Theologis A."/>
            <person name="Ecker J.R."/>
        </authorList>
    </citation>
    <scope>NUCLEOTIDE SEQUENCE [LARGE SCALE MRNA]</scope>
    <source>
        <strain>cv. Columbia</strain>
    </source>
</reference>
<reference key="5">
    <citation type="journal article" date="2007" name="Phytochemistry">
        <title>Functional genomic analysis of Arabidopsis thaliana glycoside hydrolase family 35.</title>
        <authorList>
            <person name="Ahn Y.O."/>
            <person name="Zheng M."/>
            <person name="Bevan D.R."/>
            <person name="Esen A."/>
            <person name="Shiu S.-H."/>
            <person name="Benson J."/>
            <person name="Peng H.-P."/>
            <person name="Miller J.T."/>
            <person name="Cheng C.-L."/>
            <person name="Poulton J.E."/>
            <person name="Shih M.-C."/>
        </authorList>
    </citation>
    <scope>TISSUE SPECIFICITY</scope>
    <scope>GENE FAMILY</scope>
    <scope>NOMENCLATURE</scope>
</reference>
<protein>
    <recommendedName>
        <fullName>Beta-galactosidase 5</fullName>
        <shortName>Lactase 5</shortName>
        <ecNumber>3.2.1.23</ecNumber>
    </recommendedName>
</protein>
<sequence length="732" mass="81444">MGTTILVLSKILTFLLTTMLIGSSVIQCSSVTYDKKAIVINGHRRILLSGSIHYPRSTPEMWEDLIKKAKDGGLDVIDTYVFWNGHEPSPGTYNFEGRYDLVRFIKTIQEVGLYVHLRIGPYVCAEWNFGGFPVWLKYVDGISFRTDNGPFKSAMQGFTEKIVQMMKEHRFFASQGGPIILSQIENEFEPDLKGLGPAGHSYVNWAAKMAVGLNTGVPWVMCKEDDAPDPIINTCNGFYCDYFTPNKPYKPTMWTEAWSGWFTEFGGTVPKRPVEDLAFGVARFIQKGGSYINYYMYHGGTNFGRTAGGPFITTSYDYDAPIDEYGLVQEPKYSHLKQLHQAIKQCEAALVSSDPHVTKLGNYEEAHVFTAGKGSCVAFLTNYHMNAPAKVVFNNRHYTLPAWSISILPDCRNVVFNTATVAAKTSHVQMVPSGSILYSVARYDEDIATYGNRGTITARGLLEQVNVTRDTTDYLWYTTSVDIKASESFLRGGKWPTLTVDSAGHAVHVFVNGHFYGSAFGTRENRKFSFSSQVNLRGGANKIALLSVAVGLPNVGPHFETWATGIVGSVVLHGLDEGNKDLSWQKWTYQAGLRGESMNLVSPTEDSSVDWIKGSLAKQNKQPLTWYKAYFDAPRGNEPLALDLKSMGKGQAWINGQSIGRYWMAFAKGDCGSCNYAGTYRQNKCQSGCGEPTQRWYHVPRSWLKPKGNLLVLFEELGGDISKVSVVKRSVN</sequence>
<dbReference type="EC" id="3.2.1.23"/>
<dbReference type="EMBL" id="AJ270301">
    <property type="protein sequence ID" value="CAB64741.1"/>
    <property type="molecule type" value="mRNA"/>
</dbReference>
<dbReference type="EMBL" id="AC007915">
    <property type="protein sequence ID" value="AAF69162.1"/>
    <property type="molecule type" value="Genomic_DNA"/>
</dbReference>
<dbReference type="EMBL" id="CP002684">
    <property type="protein sequence ID" value="AEE32082.1"/>
    <property type="molecule type" value="Genomic_DNA"/>
</dbReference>
<dbReference type="EMBL" id="AY058098">
    <property type="protein sequence ID" value="AAL24206.1"/>
    <property type="molecule type" value="mRNA"/>
</dbReference>
<dbReference type="EMBL" id="AY069911">
    <property type="protein sequence ID" value="AAL47461.1"/>
    <property type="molecule type" value="mRNA"/>
</dbReference>
<dbReference type="EMBL" id="AY093977">
    <property type="protein sequence ID" value="AAM16238.1"/>
    <property type="molecule type" value="mRNA"/>
</dbReference>
<dbReference type="RefSeq" id="NP_175127.1">
    <property type="nucleotide sequence ID" value="NM_103587.3"/>
</dbReference>
<dbReference type="SMR" id="Q9MAJ7"/>
<dbReference type="FunCoup" id="Q9MAJ7">
    <property type="interactions" value="75"/>
</dbReference>
<dbReference type="STRING" id="3702.Q9MAJ7"/>
<dbReference type="CAZy" id="GH35">
    <property type="family name" value="Glycoside Hydrolase Family 35"/>
</dbReference>
<dbReference type="GlyCosmos" id="Q9MAJ7">
    <property type="glycosylation" value="1 site, No reported glycans"/>
</dbReference>
<dbReference type="GlyGen" id="Q9MAJ7">
    <property type="glycosylation" value="1 site"/>
</dbReference>
<dbReference type="iPTMnet" id="Q9MAJ7"/>
<dbReference type="PaxDb" id="3702-AT1G45130.1"/>
<dbReference type="ProteomicsDB" id="240760"/>
<dbReference type="EnsemblPlants" id="AT1G45130.1">
    <property type="protein sequence ID" value="AT1G45130.1"/>
    <property type="gene ID" value="AT1G45130"/>
</dbReference>
<dbReference type="GeneID" id="841080"/>
<dbReference type="Gramene" id="AT1G45130.1">
    <property type="protein sequence ID" value="AT1G45130.1"/>
    <property type="gene ID" value="AT1G45130"/>
</dbReference>
<dbReference type="KEGG" id="ath:AT1G45130"/>
<dbReference type="Araport" id="AT1G45130"/>
<dbReference type="TAIR" id="AT1G45130">
    <property type="gene designation" value="BGAL5"/>
</dbReference>
<dbReference type="eggNOG" id="KOG0496">
    <property type="taxonomic scope" value="Eukaryota"/>
</dbReference>
<dbReference type="HOGENOM" id="CLU_007853_4_0_1"/>
<dbReference type="InParanoid" id="Q9MAJ7"/>
<dbReference type="PhylomeDB" id="Q9MAJ7"/>
<dbReference type="BioCyc" id="ARA:AT1G45130-MONOMER"/>
<dbReference type="BRENDA" id="3.2.1.23">
    <property type="organism ID" value="399"/>
</dbReference>
<dbReference type="PRO" id="PR:Q9MAJ7"/>
<dbReference type="Proteomes" id="UP000006548">
    <property type="component" value="Chromosome 1"/>
</dbReference>
<dbReference type="ExpressionAtlas" id="Q9MAJ7">
    <property type="expression patterns" value="baseline and differential"/>
</dbReference>
<dbReference type="GO" id="GO:0048046">
    <property type="term" value="C:apoplast"/>
    <property type="evidence" value="ECO:0007669"/>
    <property type="project" value="UniProtKB-SubCell"/>
</dbReference>
<dbReference type="GO" id="GO:0005634">
    <property type="term" value="C:nucleus"/>
    <property type="evidence" value="ECO:0007005"/>
    <property type="project" value="TAIR"/>
</dbReference>
<dbReference type="GO" id="GO:0009505">
    <property type="term" value="C:plant-type cell wall"/>
    <property type="evidence" value="ECO:0000314"/>
    <property type="project" value="TAIR"/>
</dbReference>
<dbReference type="GO" id="GO:0004565">
    <property type="term" value="F:beta-galactosidase activity"/>
    <property type="evidence" value="ECO:0007669"/>
    <property type="project" value="UniProtKB-EC"/>
</dbReference>
<dbReference type="GO" id="GO:0005975">
    <property type="term" value="P:carbohydrate metabolic process"/>
    <property type="evidence" value="ECO:0007669"/>
    <property type="project" value="InterPro"/>
</dbReference>
<dbReference type="FunFam" id="2.60.120.260:FF:000061">
    <property type="entry name" value="Beta-galactosidase"/>
    <property type="match status" value="1"/>
</dbReference>
<dbReference type="FunFam" id="2.60.120.260:FF:000076">
    <property type="entry name" value="Beta-galactosidase"/>
    <property type="match status" value="1"/>
</dbReference>
<dbReference type="FunFam" id="2.60.120.260:FF:000142">
    <property type="entry name" value="Beta-galactosidase"/>
    <property type="match status" value="1"/>
</dbReference>
<dbReference type="FunFam" id="3.20.20.80:FF:000021">
    <property type="entry name" value="Beta-galactosidase"/>
    <property type="match status" value="1"/>
</dbReference>
<dbReference type="Gene3D" id="2.60.120.260">
    <property type="entry name" value="Galactose-binding domain-like"/>
    <property type="match status" value="2"/>
</dbReference>
<dbReference type="Gene3D" id="3.20.20.80">
    <property type="entry name" value="Glycosidases"/>
    <property type="match status" value="1"/>
</dbReference>
<dbReference type="InterPro" id="IPR048913">
    <property type="entry name" value="BetaGal_gal-bd"/>
</dbReference>
<dbReference type="InterPro" id="IPR008979">
    <property type="entry name" value="Galactose-bd-like_sf"/>
</dbReference>
<dbReference type="InterPro" id="IPR041392">
    <property type="entry name" value="GHD"/>
</dbReference>
<dbReference type="InterPro" id="IPR031330">
    <property type="entry name" value="Gly_Hdrlase_35_cat"/>
</dbReference>
<dbReference type="InterPro" id="IPR019801">
    <property type="entry name" value="Glyco_hydro_35_CS"/>
</dbReference>
<dbReference type="InterPro" id="IPR001944">
    <property type="entry name" value="Glycoside_Hdrlase_35"/>
</dbReference>
<dbReference type="InterPro" id="IPR017853">
    <property type="entry name" value="Glycoside_hydrolase_SF"/>
</dbReference>
<dbReference type="PANTHER" id="PTHR23421">
    <property type="entry name" value="BETA-GALACTOSIDASE RELATED"/>
    <property type="match status" value="1"/>
</dbReference>
<dbReference type="Pfam" id="PF21467">
    <property type="entry name" value="BetaGal_gal-bd"/>
    <property type="match status" value="2"/>
</dbReference>
<dbReference type="Pfam" id="PF17834">
    <property type="entry name" value="GHD"/>
    <property type="match status" value="1"/>
</dbReference>
<dbReference type="Pfam" id="PF01301">
    <property type="entry name" value="Glyco_hydro_35"/>
    <property type="match status" value="1"/>
</dbReference>
<dbReference type="PRINTS" id="PR00742">
    <property type="entry name" value="GLHYDRLASE35"/>
</dbReference>
<dbReference type="SUPFAM" id="SSF51445">
    <property type="entry name" value="(Trans)glycosidases"/>
    <property type="match status" value="1"/>
</dbReference>
<dbReference type="SUPFAM" id="SSF49785">
    <property type="entry name" value="Galactose-binding domain-like"/>
    <property type="match status" value="2"/>
</dbReference>
<dbReference type="PROSITE" id="PS01182">
    <property type="entry name" value="GLYCOSYL_HYDROL_F35"/>
    <property type="match status" value="1"/>
</dbReference>
<keyword id="KW-0052">Apoplast</keyword>
<keyword id="KW-0325">Glycoprotein</keyword>
<keyword id="KW-0326">Glycosidase</keyword>
<keyword id="KW-0378">Hydrolase</keyword>
<keyword id="KW-1185">Reference proteome</keyword>
<keyword id="KW-0964">Secreted</keyword>
<keyword id="KW-0732">Signal</keyword>
<gene>
    <name type="primary">BGAL5</name>
    <name type="ordered locus">At1g45130</name>
    <name type="ORF">F27F5.20</name>
</gene>
<organism>
    <name type="scientific">Arabidopsis thaliana</name>
    <name type="common">Mouse-ear cress</name>
    <dbReference type="NCBI Taxonomy" id="3702"/>
    <lineage>
        <taxon>Eukaryota</taxon>
        <taxon>Viridiplantae</taxon>
        <taxon>Streptophyta</taxon>
        <taxon>Embryophyta</taxon>
        <taxon>Tracheophyta</taxon>
        <taxon>Spermatophyta</taxon>
        <taxon>Magnoliopsida</taxon>
        <taxon>eudicotyledons</taxon>
        <taxon>Gunneridae</taxon>
        <taxon>Pentapetalae</taxon>
        <taxon>rosids</taxon>
        <taxon>malvids</taxon>
        <taxon>Brassicales</taxon>
        <taxon>Brassicaceae</taxon>
        <taxon>Camelineae</taxon>
        <taxon>Arabidopsis</taxon>
    </lineage>
</organism>
<feature type="signal peptide" evidence="1">
    <location>
        <begin position="1"/>
        <end position="23"/>
    </location>
</feature>
<feature type="chain" id="PRO_5000065880" description="Beta-galactosidase 5">
    <location>
        <begin position="24"/>
        <end position="732"/>
    </location>
</feature>
<feature type="active site" description="Proton donor" evidence="1">
    <location>
        <position position="187"/>
    </location>
</feature>
<feature type="active site" description="Nucleophile" evidence="1">
    <location>
        <position position="256"/>
    </location>
</feature>
<feature type="glycosylation site" description="N-linked (GlcNAc...) asparagine" evidence="1">
    <location>
        <position position="466"/>
    </location>
</feature>
<feature type="sequence conflict" description="In Ref. 1; CAB64741." evidence="3" ref="1">
    <original>R</original>
    <variation>P</variation>
    <location>
        <position position="453"/>
    </location>
</feature>
<feature type="sequence conflict" description="In Ref. 1; CAB64741." evidence="3" ref="1">
    <original>V</original>
    <variation>A</variation>
    <location>
        <position position="571"/>
    </location>
</feature>
<feature type="sequence conflict" description="In Ref. 4; AAL24206." evidence="3" ref="4">
    <original>A</original>
    <variation>V</variation>
    <location>
        <position position="633"/>
    </location>
</feature>
<proteinExistence type="evidence at transcript level"/>